<evidence type="ECO:0000255" key="1">
    <source>
        <dbReference type="HAMAP-Rule" id="MF_01582"/>
    </source>
</evidence>
<comment type="function">
    <text evidence="1">Involved in the import of serine and threonine into the cell, with the concomitant import of sodium (symport system).</text>
</comment>
<comment type="catalytic activity">
    <reaction evidence="1">
        <text>L-serine(in) + Na(+)(in) = L-serine(out) + Na(+)(out)</text>
        <dbReference type="Rhea" id="RHEA:29575"/>
        <dbReference type="ChEBI" id="CHEBI:29101"/>
        <dbReference type="ChEBI" id="CHEBI:33384"/>
    </reaction>
    <physiologicalReaction direction="right-to-left" evidence="1">
        <dbReference type="Rhea" id="RHEA:29577"/>
    </physiologicalReaction>
</comment>
<comment type="catalytic activity">
    <reaction evidence="1">
        <text>L-threonine(in) + Na(+)(in) = L-threonine(out) + Na(+)(out)</text>
        <dbReference type="Rhea" id="RHEA:69999"/>
        <dbReference type="ChEBI" id="CHEBI:29101"/>
        <dbReference type="ChEBI" id="CHEBI:57926"/>
    </reaction>
    <physiologicalReaction direction="right-to-left" evidence="1">
        <dbReference type="Rhea" id="RHEA:70001"/>
    </physiologicalReaction>
</comment>
<comment type="subcellular location">
    <subcellularLocation>
        <location evidence="1">Cell membrane</location>
        <topology evidence="1">Multi-pass membrane protein</topology>
    </subcellularLocation>
</comment>
<comment type="similarity">
    <text evidence="1">Belongs to the dicarboxylate/amino acid:cation symporter (DAACS) (TC 2.A.23) family.</text>
</comment>
<sequence>MNKIISVWKKMNLIRKIGIGVVLGVLLGLIAPKITVIALFGSLFVGALKAIAPLLVLTLVAHALSQAPAGQKSNMRTVICLYLFGTFAAAFIAVGASYLFPIKLVLSTTTTTDITPPQGIAEVFQDLLLKVVDNPINALATANYIGVLTWAAVFGLAFRHASKTTKDLLQSTAEVISKVVGWIIGLAPFGIMGLVFDTIANNGLTALKDYGLLLLLLVGSMIFVALVVNPLIAFLVMKKNPYPLVFECLRVSGVTAFFTRSSAANIPVNMQLCKRLGVDPDTYSVSIPLGATINMAGAAITINILTMAAVHTLGISVDFSSALLLSVVASLSAAGASGVAGGSLLLIPVACSLFGIPNELAMQVVGVGFVVGVIQDSCEAALNSSTDVLFTVVAERSAWKK</sequence>
<keyword id="KW-0029">Amino-acid transport</keyword>
<keyword id="KW-1003">Cell membrane</keyword>
<keyword id="KW-0472">Membrane</keyword>
<keyword id="KW-0769">Symport</keyword>
<keyword id="KW-0812">Transmembrane</keyword>
<keyword id="KW-1133">Transmembrane helix</keyword>
<keyword id="KW-0813">Transport</keyword>
<proteinExistence type="inferred from homology"/>
<reference key="1">
    <citation type="journal article" date="2007" name="PLoS ONE">
        <title>A glimpse of streptococcal toxic shock syndrome from comparative genomics of S. suis 2 Chinese isolates.</title>
        <authorList>
            <person name="Chen C."/>
            <person name="Tang J."/>
            <person name="Dong W."/>
            <person name="Wang C."/>
            <person name="Feng Y."/>
            <person name="Wang J."/>
            <person name="Zheng F."/>
            <person name="Pan X."/>
            <person name="Liu D."/>
            <person name="Li M."/>
            <person name="Song Y."/>
            <person name="Zhu X."/>
            <person name="Sun H."/>
            <person name="Feng T."/>
            <person name="Guo Z."/>
            <person name="Ju A."/>
            <person name="Ge J."/>
            <person name="Dong Y."/>
            <person name="Sun W."/>
            <person name="Jiang Y."/>
            <person name="Wang J."/>
            <person name="Yan J."/>
            <person name="Yang H."/>
            <person name="Wang X."/>
            <person name="Gao G.F."/>
            <person name="Yang R."/>
            <person name="Wang J."/>
            <person name="Yu J."/>
        </authorList>
    </citation>
    <scope>NUCLEOTIDE SEQUENCE [LARGE SCALE GENOMIC DNA]</scope>
    <source>
        <strain>98HAH33</strain>
    </source>
</reference>
<protein>
    <recommendedName>
        <fullName evidence="1">Serine/threonine transporter SstT</fullName>
    </recommendedName>
    <alternativeName>
        <fullName evidence="1">Na(+)/serine-threonine symporter</fullName>
    </alternativeName>
</protein>
<gene>
    <name evidence="1" type="primary">sstT</name>
    <name type="ordered locus">SSU98_1475</name>
</gene>
<dbReference type="EMBL" id="CP000408">
    <property type="protein sequence ID" value="ABP92633.1"/>
    <property type="molecule type" value="Genomic_DNA"/>
</dbReference>
<dbReference type="SMR" id="A4W2P4"/>
<dbReference type="KEGG" id="ssv:SSU98_1475"/>
<dbReference type="HOGENOM" id="CLU_044581_0_0_9"/>
<dbReference type="GO" id="GO:0005886">
    <property type="term" value="C:plasma membrane"/>
    <property type="evidence" value="ECO:0007669"/>
    <property type="project" value="UniProtKB-SubCell"/>
</dbReference>
<dbReference type="GO" id="GO:0005295">
    <property type="term" value="F:neutral L-amino acid:sodium symporter activity"/>
    <property type="evidence" value="ECO:0007669"/>
    <property type="project" value="TreeGrafter"/>
</dbReference>
<dbReference type="GO" id="GO:0032329">
    <property type="term" value="P:serine transport"/>
    <property type="evidence" value="ECO:0007669"/>
    <property type="project" value="InterPro"/>
</dbReference>
<dbReference type="GO" id="GO:0015826">
    <property type="term" value="P:threonine transport"/>
    <property type="evidence" value="ECO:0007669"/>
    <property type="project" value="InterPro"/>
</dbReference>
<dbReference type="FunFam" id="1.10.3860.10:FF:000003">
    <property type="entry name" value="Serine/threonine transporter sstT"/>
    <property type="match status" value="1"/>
</dbReference>
<dbReference type="Gene3D" id="1.10.3860.10">
    <property type="entry name" value="Sodium:dicarboxylate symporter"/>
    <property type="match status" value="1"/>
</dbReference>
<dbReference type="HAMAP" id="MF_01582">
    <property type="entry name" value="Ser_Thr_transp_SstT"/>
    <property type="match status" value="1"/>
</dbReference>
<dbReference type="InterPro" id="IPR001991">
    <property type="entry name" value="Na-dicarboxylate_symporter"/>
</dbReference>
<dbReference type="InterPro" id="IPR036458">
    <property type="entry name" value="Na:dicarbo_symporter_sf"/>
</dbReference>
<dbReference type="InterPro" id="IPR023025">
    <property type="entry name" value="Ser_Thr_transp_SstT"/>
</dbReference>
<dbReference type="NCBIfam" id="NF010151">
    <property type="entry name" value="PRK13628.1"/>
    <property type="match status" value="1"/>
</dbReference>
<dbReference type="PANTHER" id="PTHR42865">
    <property type="entry name" value="PROTON/GLUTAMATE-ASPARTATE SYMPORTER"/>
    <property type="match status" value="1"/>
</dbReference>
<dbReference type="PANTHER" id="PTHR42865:SF8">
    <property type="entry name" value="SERINE_THREONINE TRANSPORTER SSTT"/>
    <property type="match status" value="1"/>
</dbReference>
<dbReference type="Pfam" id="PF00375">
    <property type="entry name" value="SDF"/>
    <property type="match status" value="1"/>
</dbReference>
<dbReference type="PRINTS" id="PR00173">
    <property type="entry name" value="EDTRNSPORT"/>
</dbReference>
<dbReference type="SUPFAM" id="SSF118215">
    <property type="entry name" value="Proton glutamate symport protein"/>
    <property type="match status" value="1"/>
</dbReference>
<organism>
    <name type="scientific">Streptococcus suis (strain 98HAH33)</name>
    <dbReference type="NCBI Taxonomy" id="391296"/>
    <lineage>
        <taxon>Bacteria</taxon>
        <taxon>Bacillati</taxon>
        <taxon>Bacillota</taxon>
        <taxon>Bacilli</taxon>
        <taxon>Lactobacillales</taxon>
        <taxon>Streptococcaceae</taxon>
        <taxon>Streptococcus</taxon>
    </lineage>
</organism>
<accession>A4W2P4</accession>
<name>SSTT_STRS2</name>
<feature type="chain" id="PRO_0000309148" description="Serine/threonine transporter SstT">
    <location>
        <begin position="1"/>
        <end position="401"/>
    </location>
</feature>
<feature type="transmembrane region" description="Helical" evidence="1">
    <location>
        <begin position="17"/>
        <end position="37"/>
    </location>
</feature>
<feature type="transmembrane region" description="Helical" evidence="1">
    <location>
        <begin position="40"/>
        <end position="60"/>
    </location>
</feature>
<feature type="transmembrane region" description="Helical" evidence="1">
    <location>
        <begin position="78"/>
        <end position="98"/>
    </location>
</feature>
<feature type="transmembrane region" description="Helical" evidence="1">
    <location>
        <begin position="138"/>
        <end position="158"/>
    </location>
</feature>
<feature type="transmembrane region" description="Helical" evidence="1">
    <location>
        <begin position="179"/>
        <end position="199"/>
    </location>
</feature>
<feature type="transmembrane region" description="Helical" evidence="1">
    <location>
        <begin position="212"/>
        <end position="232"/>
    </location>
</feature>
<feature type="transmembrane region" description="Helical" evidence="1">
    <location>
        <begin position="295"/>
        <end position="315"/>
    </location>
</feature>
<feature type="transmembrane region" description="Helical" evidence="1">
    <location>
        <begin position="336"/>
        <end position="356"/>
    </location>
</feature>